<proteinExistence type="evidence at protein level"/>
<name>SSRP_BACSU</name>
<sequence>MPKGSGKVLSQNKKANHDYFIEETYETGIVLQGTEIKSIRAGRVNLKDSFAKIERGEVFLHNMHVSPYEQGNRYNHDPLRTRKLLMHRKEINKLIGLTKEKGYSLVPLKLYLKNGFAKVLLGLGKGKKNYDKREDLKRKDAKREIERAFRDSQKGF</sequence>
<protein>
    <recommendedName>
        <fullName evidence="1">SsrA-binding protein</fullName>
    </recommendedName>
    <alternativeName>
        <fullName evidence="1">Small protein B</fullName>
    </alternativeName>
</protein>
<reference key="1">
    <citation type="journal article" date="1997" name="Nature">
        <title>The complete genome sequence of the Gram-positive bacterium Bacillus subtilis.</title>
        <authorList>
            <person name="Kunst F."/>
            <person name="Ogasawara N."/>
            <person name="Moszer I."/>
            <person name="Albertini A.M."/>
            <person name="Alloni G."/>
            <person name="Azevedo V."/>
            <person name="Bertero M.G."/>
            <person name="Bessieres P."/>
            <person name="Bolotin A."/>
            <person name="Borchert S."/>
            <person name="Borriss R."/>
            <person name="Boursier L."/>
            <person name="Brans A."/>
            <person name="Braun M."/>
            <person name="Brignell S.C."/>
            <person name="Bron S."/>
            <person name="Brouillet S."/>
            <person name="Bruschi C.V."/>
            <person name="Caldwell B."/>
            <person name="Capuano V."/>
            <person name="Carter N.M."/>
            <person name="Choi S.-K."/>
            <person name="Codani J.-J."/>
            <person name="Connerton I.F."/>
            <person name="Cummings N.J."/>
            <person name="Daniel R.A."/>
            <person name="Denizot F."/>
            <person name="Devine K.M."/>
            <person name="Duesterhoeft A."/>
            <person name="Ehrlich S.D."/>
            <person name="Emmerson P.T."/>
            <person name="Entian K.-D."/>
            <person name="Errington J."/>
            <person name="Fabret C."/>
            <person name="Ferrari E."/>
            <person name="Foulger D."/>
            <person name="Fritz C."/>
            <person name="Fujita M."/>
            <person name="Fujita Y."/>
            <person name="Fuma S."/>
            <person name="Galizzi A."/>
            <person name="Galleron N."/>
            <person name="Ghim S.-Y."/>
            <person name="Glaser P."/>
            <person name="Goffeau A."/>
            <person name="Golightly E.J."/>
            <person name="Grandi G."/>
            <person name="Guiseppi G."/>
            <person name="Guy B.J."/>
            <person name="Haga K."/>
            <person name="Haiech J."/>
            <person name="Harwood C.R."/>
            <person name="Henaut A."/>
            <person name="Hilbert H."/>
            <person name="Holsappel S."/>
            <person name="Hosono S."/>
            <person name="Hullo M.-F."/>
            <person name="Itaya M."/>
            <person name="Jones L.-M."/>
            <person name="Joris B."/>
            <person name="Karamata D."/>
            <person name="Kasahara Y."/>
            <person name="Klaerr-Blanchard M."/>
            <person name="Klein C."/>
            <person name="Kobayashi Y."/>
            <person name="Koetter P."/>
            <person name="Koningstein G."/>
            <person name="Krogh S."/>
            <person name="Kumano M."/>
            <person name="Kurita K."/>
            <person name="Lapidus A."/>
            <person name="Lardinois S."/>
            <person name="Lauber J."/>
            <person name="Lazarevic V."/>
            <person name="Lee S.-M."/>
            <person name="Levine A."/>
            <person name="Liu H."/>
            <person name="Masuda S."/>
            <person name="Mauel C."/>
            <person name="Medigue C."/>
            <person name="Medina N."/>
            <person name="Mellado R.P."/>
            <person name="Mizuno M."/>
            <person name="Moestl D."/>
            <person name="Nakai S."/>
            <person name="Noback M."/>
            <person name="Noone D."/>
            <person name="O'Reilly M."/>
            <person name="Ogawa K."/>
            <person name="Ogiwara A."/>
            <person name="Oudega B."/>
            <person name="Park S.-H."/>
            <person name="Parro V."/>
            <person name="Pohl T.M."/>
            <person name="Portetelle D."/>
            <person name="Porwollik S."/>
            <person name="Prescott A.M."/>
            <person name="Presecan E."/>
            <person name="Pujic P."/>
            <person name="Purnelle B."/>
            <person name="Rapoport G."/>
            <person name="Rey M."/>
            <person name="Reynolds S."/>
            <person name="Rieger M."/>
            <person name="Rivolta C."/>
            <person name="Rocha E."/>
            <person name="Roche B."/>
            <person name="Rose M."/>
            <person name="Sadaie Y."/>
            <person name="Sato T."/>
            <person name="Scanlan E."/>
            <person name="Schleich S."/>
            <person name="Schroeter R."/>
            <person name="Scoffone F."/>
            <person name="Sekiguchi J."/>
            <person name="Sekowska A."/>
            <person name="Seror S.J."/>
            <person name="Serror P."/>
            <person name="Shin B.-S."/>
            <person name="Soldo B."/>
            <person name="Sorokin A."/>
            <person name="Tacconi E."/>
            <person name="Takagi T."/>
            <person name="Takahashi H."/>
            <person name="Takemaru K."/>
            <person name="Takeuchi M."/>
            <person name="Tamakoshi A."/>
            <person name="Tanaka T."/>
            <person name="Terpstra P."/>
            <person name="Tognoni A."/>
            <person name="Tosato V."/>
            <person name="Uchiyama S."/>
            <person name="Vandenbol M."/>
            <person name="Vannier F."/>
            <person name="Vassarotti A."/>
            <person name="Viari A."/>
            <person name="Wambutt R."/>
            <person name="Wedler E."/>
            <person name="Wedler H."/>
            <person name="Weitzenegger T."/>
            <person name="Winters P."/>
            <person name="Wipat A."/>
            <person name="Yamamoto H."/>
            <person name="Yamane K."/>
            <person name="Yasumoto K."/>
            <person name="Yata K."/>
            <person name="Yoshida K."/>
            <person name="Yoshikawa H.-F."/>
            <person name="Zumstein E."/>
            <person name="Yoshikawa H."/>
            <person name="Danchin A."/>
        </authorList>
    </citation>
    <scope>NUCLEOTIDE SEQUENCE [LARGE SCALE GENOMIC DNA]</scope>
    <source>
        <strain>168</strain>
    </source>
</reference>
<reference key="2">
    <citation type="journal article" date="2001" name="J. Bacteriol.">
        <title>SsrA-mediated tagging in Bacillus subtilis.</title>
        <authorList>
            <person name="Wiegert T."/>
            <person name="Schumann W."/>
        </authorList>
    </citation>
    <scope>FUNCTION</scope>
    <scope>DISRUPTION PHENOTYPE</scope>
    <source>
        <strain>168 / Marburg / 1012</strain>
    </source>
</reference>
<reference key="3">
    <citation type="journal article" date="2007" name="J. Bacteriol.">
        <title>The SsrA-SmpB ribosome rescue system is important for growth of Bacillus subtilis at low and high temperatures.</title>
        <authorList>
            <person name="Shin J.H."/>
            <person name="Price C.W."/>
        </authorList>
    </citation>
    <scope>INDUCTION</scope>
    <scope>DISRUPTION PHENOTYPE</scope>
    <source>
        <strain>168 / Marburg / ATCC 6051 / DSM 10 / JCM 1465 / NBRC 13719 / NCIMB 3610 / NRRL NRS-744 / VKM B-501</strain>
    </source>
</reference>
<reference key="4">
    <citation type="journal article" date="2008" name="Mol. Microbiol.">
        <title>tmRNA-dependent trans-translation is required for sporulation in Bacillus subtilis.</title>
        <authorList>
            <person name="Abe T."/>
            <person name="Sakaki K."/>
            <person name="Fujihara A."/>
            <person name="Ujiie H."/>
            <person name="Ushida C."/>
            <person name="Himeno H."/>
            <person name="Sato T."/>
            <person name="Muto A."/>
        </authorList>
    </citation>
    <scope>PROBABLE FUNCTION IN SPORULATION</scope>
    <source>
        <strain>168</strain>
    </source>
</reference>
<dbReference type="EMBL" id="AL009126">
    <property type="protein sequence ID" value="CAB15365.1"/>
    <property type="molecule type" value="Genomic_DNA"/>
</dbReference>
<dbReference type="PIR" id="F70027">
    <property type="entry name" value="F70027"/>
</dbReference>
<dbReference type="RefSeq" id="NP_391240.1">
    <property type="nucleotide sequence ID" value="NC_000964.3"/>
</dbReference>
<dbReference type="RefSeq" id="WP_003220025.1">
    <property type="nucleotide sequence ID" value="NZ_OZ025638.1"/>
</dbReference>
<dbReference type="SMR" id="O32230"/>
<dbReference type="FunCoup" id="O32230">
    <property type="interactions" value="440"/>
</dbReference>
<dbReference type="STRING" id="224308.BSU33600"/>
<dbReference type="PaxDb" id="224308-BSU33600"/>
<dbReference type="EnsemblBacteria" id="CAB15365">
    <property type="protein sequence ID" value="CAB15365"/>
    <property type="gene ID" value="BSU_33600"/>
</dbReference>
<dbReference type="GeneID" id="76988208"/>
<dbReference type="GeneID" id="936170"/>
<dbReference type="KEGG" id="bsu:BSU33600"/>
<dbReference type="PATRIC" id="fig|224308.179.peg.3645"/>
<dbReference type="eggNOG" id="COG0691">
    <property type="taxonomic scope" value="Bacteria"/>
</dbReference>
<dbReference type="InParanoid" id="O32230"/>
<dbReference type="OrthoDB" id="9805462at2"/>
<dbReference type="PhylomeDB" id="O32230"/>
<dbReference type="BioCyc" id="BSUB:BSU33600-MONOMER"/>
<dbReference type="PRO" id="PR:O32230"/>
<dbReference type="Proteomes" id="UP000001570">
    <property type="component" value="Chromosome"/>
</dbReference>
<dbReference type="GO" id="GO:0005829">
    <property type="term" value="C:cytosol"/>
    <property type="evidence" value="ECO:0000318"/>
    <property type="project" value="GO_Central"/>
</dbReference>
<dbReference type="GO" id="GO:0003723">
    <property type="term" value="F:RNA binding"/>
    <property type="evidence" value="ECO:0000318"/>
    <property type="project" value="GO_Central"/>
</dbReference>
<dbReference type="GO" id="GO:0030435">
    <property type="term" value="P:sporulation resulting in formation of a cellular spore"/>
    <property type="evidence" value="ECO:0007669"/>
    <property type="project" value="UniProtKB-KW"/>
</dbReference>
<dbReference type="GO" id="GO:0070929">
    <property type="term" value="P:trans-translation"/>
    <property type="evidence" value="ECO:0007669"/>
    <property type="project" value="UniProtKB-UniRule"/>
</dbReference>
<dbReference type="GO" id="GO:0070930">
    <property type="term" value="P:trans-translation-dependent protein tagging"/>
    <property type="evidence" value="ECO:0000315"/>
    <property type="project" value="UniProtKB"/>
</dbReference>
<dbReference type="CDD" id="cd09294">
    <property type="entry name" value="SmpB"/>
    <property type="match status" value="1"/>
</dbReference>
<dbReference type="Gene3D" id="2.40.280.10">
    <property type="match status" value="1"/>
</dbReference>
<dbReference type="HAMAP" id="MF_00023">
    <property type="entry name" value="SmpB"/>
    <property type="match status" value="1"/>
</dbReference>
<dbReference type="InterPro" id="IPR023620">
    <property type="entry name" value="SmpB"/>
</dbReference>
<dbReference type="InterPro" id="IPR000037">
    <property type="entry name" value="SsrA-bd_prot"/>
</dbReference>
<dbReference type="InterPro" id="IPR020081">
    <property type="entry name" value="SsrA-bd_prot_CS"/>
</dbReference>
<dbReference type="NCBIfam" id="NF003843">
    <property type="entry name" value="PRK05422.1"/>
    <property type="match status" value="1"/>
</dbReference>
<dbReference type="NCBIfam" id="TIGR00086">
    <property type="entry name" value="smpB"/>
    <property type="match status" value="1"/>
</dbReference>
<dbReference type="PANTHER" id="PTHR30308:SF2">
    <property type="entry name" value="SSRA-BINDING PROTEIN"/>
    <property type="match status" value="1"/>
</dbReference>
<dbReference type="PANTHER" id="PTHR30308">
    <property type="entry name" value="TMRNA-BINDING COMPONENT OF TRANS-TRANSLATION TAGGING COMPLEX"/>
    <property type="match status" value="1"/>
</dbReference>
<dbReference type="Pfam" id="PF01668">
    <property type="entry name" value="SmpB"/>
    <property type="match status" value="1"/>
</dbReference>
<dbReference type="SUPFAM" id="SSF74982">
    <property type="entry name" value="Small protein B (SmpB)"/>
    <property type="match status" value="1"/>
</dbReference>
<dbReference type="PROSITE" id="PS01317">
    <property type="entry name" value="SSRP"/>
    <property type="match status" value="1"/>
</dbReference>
<evidence type="ECO:0000255" key="1">
    <source>
        <dbReference type="HAMAP-Rule" id="MF_00023"/>
    </source>
</evidence>
<evidence type="ECO:0000269" key="2">
    <source>
    </source>
</evidence>
<evidence type="ECO:0000269" key="3">
    <source>
    </source>
</evidence>
<evidence type="ECO:0000305" key="4">
    <source>
    </source>
</evidence>
<feature type="chain" id="PRO_0000102906" description="SsrA-binding protein">
    <location>
        <begin position="1"/>
        <end position="156"/>
    </location>
</feature>
<organism>
    <name type="scientific">Bacillus subtilis (strain 168)</name>
    <dbReference type="NCBI Taxonomy" id="224308"/>
    <lineage>
        <taxon>Bacteria</taxon>
        <taxon>Bacillati</taxon>
        <taxon>Bacillota</taxon>
        <taxon>Bacilli</taxon>
        <taxon>Bacillales</taxon>
        <taxon>Bacillaceae</taxon>
        <taxon>Bacillus</taxon>
    </lineage>
</organism>
<gene>
    <name evidence="1" type="primary">smpB</name>
    <name type="synonym">yvaI</name>
    <name type="ordered locus">BSU33600</name>
</gene>
<accession>O32230</accession>
<comment type="function">
    <text evidence="1 2 4">Required for rescue of stalled ribosomes mediated by trans-translation. Binds to transfer-messenger RNA (tmRNA), required for stable association of tmRNA with ribosomes. tmRNA and SmpB together mimic tRNA shape, replacing the anticodon stem-loop with SmpB. tmRNA is encoded by the ssrA gene; the 2 termini fold to resemble tRNA(Ala) and it encodes a 'tag peptide', a short internal open reading frame. During trans-translation Ala-aminoacylated tmRNA acts like a tRNA, entering the A-site of stalled ribosomes, displacing the stalled mRNA. The ribosome then switches to translate the ORF on the tmRNA; the nascent peptide is terminated with the 'tag peptide' encoded by the tmRNA and targeted for degradation. The ribosome is freed to recommence translation, which seems to be the essential function of trans-translation (By similarity). Required for trans-translation (PubMed:11395451). Probably required for sporulation; deletion of the gene for tmRNA impairs sporulation via its effect on trans-translation, and as smpB is required for trans-translation under non-stress conditions, it is also probably required during sporulation (PubMed:18673456).</text>
</comment>
<comment type="subcellular location">
    <subcellularLocation>
        <location evidence="1">Cytoplasm</location>
    </subcellularLocation>
    <text evidence="1">The tmRNA-SmpB complex associates with stalled 70S ribosomes.</text>
</comment>
<comment type="induction">
    <text evidence="3">Constitutively expressed, part of a 5 gene operon with multiple promoters. Not ethanol-stress induced.</text>
</comment>
<comment type="disruption phenotype">
    <text evidence="2 3">Not essential for growth; loss of trans-translation (PubMed:11395451). Significantly decreased growth at 16 and 52 degrees Celsius (PubMed:17369301).</text>
</comment>
<comment type="similarity">
    <text evidence="1">Belongs to the SmpB family.</text>
</comment>
<keyword id="KW-0963">Cytoplasm</keyword>
<keyword id="KW-1185">Reference proteome</keyword>
<keyword id="KW-0694">RNA-binding</keyword>
<keyword id="KW-0749">Sporulation</keyword>